<proteinExistence type="evidence at protein level"/>
<protein>
    <recommendedName>
        <fullName evidence="3">Large ribosomal subunit protein eL24</fullName>
    </recommendedName>
    <alternativeName>
        <fullName>60S ribosomal protein L24-A</fullName>
    </alternativeName>
</protein>
<reference key="1">
    <citation type="journal article" date="2004" name="Proc. Natl. Acad. Sci. U.S.A.">
        <title>The diploid genome sequence of Candida albicans.</title>
        <authorList>
            <person name="Jones T."/>
            <person name="Federspiel N.A."/>
            <person name="Chibana H."/>
            <person name="Dungan J."/>
            <person name="Kalman S."/>
            <person name="Magee B.B."/>
            <person name="Newport G."/>
            <person name="Thorstenson Y.R."/>
            <person name="Agabian N."/>
            <person name="Magee P.T."/>
            <person name="Davis R.W."/>
            <person name="Scherer S."/>
        </authorList>
    </citation>
    <scope>NUCLEOTIDE SEQUENCE [LARGE SCALE GENOMIC DNA]</scope>
    <source>
        <strain>SC5314 / ATCC MYA-2876</strain>
    </source>
</reference>
<reference key="2">
    <citation type="journal article" date="2007" name="Genome Biol.">
        <title>Assembly of the Candida albicans genome into sixteen supercontigs aligned on the eight chromosomes.</title>
        <authorList>
            <person name="van het Hoog M."/>
            <person name="Rast T.J."/>
            <person name="Martchenko M."/>
            <person name="Grindle S."/>
            <person name="Dignard D."/>
            <person name="Hogues H."/>
            <person name="Cuomo C."/>
            <person name="Berriman M."/>
            <person name="Scherer S."/>
            <person name="Magee B.B."/>
            <person name="Whiteway M."/>
            <person name="Chibana H."/>
            <person name="Nantel A."/>
            <person name="Magee P.T."/>
        </authorList>
    </citation>
    <scope>GENOME REANNOTATION</scope>
    <source>
        <strain>SC5314 / ATCC MYA-2876</strain>
    </source>
</reference>
<reference key="3">
    <citation type="journal article" date="2013" name="Genome Biol.">
        <title>Assembly of a phased diploid Candida albicans genome facilitates allele-specific measurements and provides a simple model for repeat and indel structure.</title>
        <authorList>
            <person name="Muzzey D."/>
            <person name="Schwartz K."/>
            <person name="Weissman J.S."/>
            <person name="Sherlock G."/>
        </authorList>
    </citation>
    <scope>NUCLEOTIDE SEQUENCE [LARGE SCALE GENOMIC DNA]</scope>
    <scope>GENOME REANNOTATION</scope>
    <source>
        <strain>SC5314 / ATCC MYA-2876</strain>
    </source>
</reference>
<reference evidence="6 7 8" key="4">
    <citation type="journal article" date="2022" name="Sci. Adv.">
        <title>E-site drug specificity of the human pathogen Candida albicans ribosome.</title>
        <authorList>
            <person name="Zgadzay Y."/>
            <person name="Kolosova O."/>
            <person name="Stetsenko A."/>
            <person name="Wu C."/>
            <person name="Bruchlen D."/>
            <person name="Usachev K."/>
            <person name="Validov S."/>
            <person name="Jenner L."/>
            <person name="Rogachev A."/>
            <person name="Yusupova G."/>
            <person name="Sachs M.S."/>
            <person name="Guskov A."/>
            <person name="Yusupov M."/>
        </authorList>
    </citation>
    <scope>STRUCTURE BY ELECTRON MICROSCOPY (2.32 ANGSTROMS) OF THE 80S RIBOSOME</scope>
    <scope>SUBUNIT</scope>
</reference>
<evidence type="ECO:0000256" key="1">
    <source>
        <dbReference type="SAM" id="MobiDB-lite"/>
    </source>
</evidence>
<evidence type="ECO:0000269" key="2">
    <source>
    </source>
</evidence>
<evidence type="ECO:0000303" key="3">
    <source>
    </source>
</evidence>
<evidence type="ECO:0000305" key="4"/>
<evidence type="ECO:0000305" key="5">
    <source>
    </source>
</evidence>
<evidence type="ECO:0007744" key="6">
    <source>
        <dbReference type="PDB" id="7PZY"/>
    </source>
</evidence>
<evidence type="ECO:0007744" key="7">
    <source>
        <dbReference type="PDB" id="7Q0F"/>
    </source>
</evidence>
<evidence type="ECO:0007744" key="8">
    <source>
        <dbReference type="PDB" id="7Q0P"/>
    </source>
</evidence>
<gene>
    <name evidence="3" type="primary">RPL24A</name>
    <name type="synonym">RPL24</name>
    <name type="ordered locus">orf19.3789</name>
    <name type="ORF">CAALFM_C404890CA</name>
</gene>
<feature type="chain" id="PRO_0000456513" description="Large ribosomal subunit protein eL24">
    <location>
        <begin position="1"/>
        <end position="155"/>
    </location>
</feature>
<feature type="region of interest" description="Disordered" evidence="1">
    <location>
        <begin position="87"/>
        <end position="155"/>
    </location>
</feature>
<feature type="compositionally biased region" description="Basic and acidic residues" evidence="1">
    <location>
        <begin position="89"/>
        <end position="129"/>
    </location>
</feature>
<feature type="compositionally biased region" description="Low complexity" evidence="1">
    <location>
        <begin position="130"/>
        <end position="143"/>
    </location>
</feature>
<organism>
    <name type="scientific">Candida albicans (strain SC5314 / ATCC MYA-2876)</name>
    <name type="common">Yeast</name>
    <dbReference type="NCBI Taxonomy" id="237561"/>
    <lineage>
        <taxon>Eukaryota</taxon>
        <taxon>Fungi</taxon>
        <taxon>Dikarya</taxon>
        <taxon>Ascomycota</taxon>
        <taxon>Saccharomycotina</taxon>
        <taxon>Pichiomycetes</taxon>
        <taxon>Debaryomycetaceae</taxon>
        <taxon>Candida/Lodderomyces clade</taxon>
        <taxon>Candida</taxon>
    </lineage>
</organism>
<sequence length="155" mass="17383">MKIEVDSFSGSKIYPGRGTLFVRGDSKIFRFQSSKSASLFQQRKNPRRISWTVLYRRHHKKGISEEAAKKRTRKTVKHQRAIVGASLELIKERRSQKPSDRKAARDSKLAKDKEAKKAAKAARKAEKAKAVASGASVVSKQQAKGSFQKVKATSR</sequence>
<comment type="function">
    <text evidence="5">Component of the ribosome, a large ribonucleoprotein complex responsible for the synthesis of proteins in the cell. The small ribosomal subunit (SSU) binds messenger RNAs (mRNAs) and translates the encoded message by selecting cognate aminoacyl-transfer RNA (tRNA) molecules. The large subunit (LSU) contains the ribosomal catalytic site termed the peptidyl transferase center (PTC), which catalyzes the formation of peptide bonds, thereby polymerizing the amino acids delivered by tRNAs into a polypeptide chain. The nascent polypeptides leave the ribosome through a tunnel in the LSU and interact with protein factors that function in enzymatic processing, targeting, and the membrane insertion of nascent chains at the exit of the ribosomal tunnel.</text>
</comment>
<comment type="subunit">
    <text evidence="2">Component of the large ribosomal subunit (PubMed:35613268). Mature ribosomes consist of a small (40S) and a large (60S) subunit (PubMed:35613268). The 40S subunit contains about 32 different proteins and 1 molecule of RNA (18S) (PubMed:35613268). The 60S subunit contains 45 different proteins and 3 molecules of RNA (25S, 5.8S and 5S) (PubMed:35613268).</text>
</comment>
<comment type="subcellular location">
    <subcellularLocation>
        <location evidence="5">Cytoplasm</location>
    </subcellularLocation>
</comment>
<comment type="similarity">
    <text evidence="4">Belongs to the eukaryotic ribosomal protein eL24 family.</text>
</comment>
<dbReference type="EMBL" id="CP017626">
    <property type="protein sequence ID" value="AOW29232.1"/>
    <property type="molecule type" value="Genomic_DNA"/>
</dbReference>
<dbReference type="RefSeq" id="XP_717194.1">
    <property type="nucleotide sequence ID" value="XM_712101.2"/>
</dbReference>
<dbReference type="PDB" id="7PZY">
    <property type="method" value="EM"/>
    <property type="resolution" value="2.32 A"/>
    <property type="chains" value="7=1-155"/>
</dbReference>
<dbReference type="PDB" id="7Q08">
    <property type="method" value="EM"/>
    <property type="resolution" value="2.56 A"/>
    <property type="chains" value="7=1-155"/>
</dbReference>
<dbReference type="PDB" id="7Q0F">
    <property type="method" value="EM"/>
    <property type="resolution" value="2.64 A"/>
    <property type="chains" value="7=1-155"/>
</dbReference>
<dbReference type="PDB" id="7Q0P">
    <property type="method" value="EM"/>
    <property type="resolution" value="2.77 A"/>
    <property type="chains" value="7=1-155"/>
</dbReference>
<dbReference type="PDB" id="7Q0R">
    <property type="method" value="EM"/>
    <property type="resolution" value="2.67 A"/>
    <property type="chains" value="7=1-155"/>
</dbReference>
<dbReference type="PDB" id="8C3A">
    <property type="method" value="X-ray"/>
    <property type="resolution" value="3.00 A"/>
    <property type="chains" value="7/BR=1-155"/>
</dbReference>
<dbReference type="PDB" id="8OGJ">
    <property type="method" value="EM"/>
    <property type="resolution" value="3.10 A"/>
    <property type="chains" value="7=1-155"/>
</dbReference>
<dbReference type="PDB" id="8OH6">
    <property type="method" value="X-ray"/>
    <property type="resolution" value="3.35 A"/>
    <property type="chains" value="7/BR=1-155"/>
</dbReference>
<dbReference type="PDB" id="8OI5">
    <property type="method" value="X-ray"/>
    <property type="resolution" value="2.90 A"/>
    <property type="chains" value="7/BR=1-155"/>
</dbReference>
<dbReference type="PDB" id="8OJ3">
    <property type="method" value="X-ray"/>
    <property type="resolution" value="3.50 A"/>
    <property type="chains" value="7/BR=1-155"/>
</dbReference>
<dbReference type="PDBsum" id="7PZY"/>
<dbReference type="PDBsum" id="7Q08"/>
<dbReference type="PDBsum" id="7Q0F"/>
<dbReference type="PDBsum" id="7Q0P"/>
<dbReference type="PDBsum" id="7Q0R"/>
<dbReference type="PDBsum" id="8C3A"/>
<dbReference type="PDBsum" id="8OGJ"/>
<dbReference type="PDBsum" id="8OH6"/>
<dbReference type="PDBsum" id="8OI5"/>
<dbReference type="PDBsum" id="8OJ3"/>
<dbReference type="SMR" id="Q5A6A1"/>
<dbReference type="FunCoup" id="Q5A6A1">
    <property type="interactions" value="941"/>
</dbReference>
<dbReference type="STRING" id="237561.Q5A6A1"/>
<dbReference type="EnsemblFungi" id="C4_04890C_A-T">
    <property type="protein sequence ID" value="C4_04890C_A-T-p1"/>
    <property type="gene ID" value="C4_04890C_A"/>
</dbReference>
<dbReference type="GeneID" id="3641174"/>
<dbReference type="KEGG" id="cal:CAALFM_C404890CA"/>
<dbReference type="CGD" id="CAL0000190222">
    <property type="gene designation" value="RPL24A"/>
</dbReference>
<dbReference type="VEuPathDB" id="FungiDB:C4_04890C_A"/>
<dbReference type="eggNOG" id="KOG1722">
    <property type="taxonomic scope" value="Eukaryota"/>
</dbReference>
<dbReference type="HOGENOM" id="CLU_106411_0_0_1"/>
<dbReference type="InParanoid" id="Q5A6A1"/>
<dbReference type="OMA" id="PGHGKKM"/>
<dbReference type="OrthoDB" id="1727108at2759"/>
<dbReference type="Proteomes" id="UP000000559">
    <property type="component" value="Chromosome 4"/>
</dbReference>
<dbReference type="GO" id="GO:0022625">
    <property type="term" value="C:cytosolic large ribosomal subunit"/>
    <property type="evidence" value="ECO:0000318"/>
    <property type="project" value="GO_Central"/>
</dbReference>
<dbReference type="GO" id="GO:0003729">
    <property type="term" value="F:mRNA binding"/>
    <property type="evidence" value="ECO:0000318"/>
    <property type="project" value="GO_Central"/>
</dbReference>
<dbReference type="GO" id="GO:0003735">
    <property type="term" value="F:structural constituent of ribosome"/>
    <property type="evidence" value="ECO:0000318"/>
    <property type="project" value="GO_Central"/>
</dbReference>
<dbReference type="GO" id="GO:0002181">
    <property type="term" value="P:cytoplasmic translation"/>
    <property type="evidence" value="ECO:0000318"/>
    <property type="project" value="GO_Central"/>
</dbReference>
<dbReference type="CDD" id="cd00472">
    <property type="entry name" value="Ribosomal_L24e_L24"/>
    <property type="match status" value="1"/>
</dbReference>
<dbReference type="FunFam" id="2.30.170.20:FF:000002">
    <property type="entry name" value="60S ribosomal protein L24"/>
    <property type="match status" value="1"/>
</dbReference>
<dbReference type="Gene3D" id="6.10.10.140">
    <property type="match status" value="1"/>
</dbReference>
<dbReference type="Gene3D" id="2.30.170.20">
    <property type="entry name" value="Ribosomal protein L24e"/>
    <property type="match status" value="1"/>
</dbReference>
<dbReference type="InterPro" id="IPR038630">
    <property type="entry name" value="L24e/L24_sf"/>
</dbReference>
<dbReference type="InterPro" id="IPR056366">
    <property type="entry name" value="Ribosomal_eL24"/>
</dbReference>
<dbReference type="InterPro" id="IPR000988">
    <property type="entry name" value="Ribosomal_eL24-rel_N"/>
</dbReference>
<dbReference type="InterPro" id="IPR023442">
    <property type="entry name" value="Ribosomal_eL24_CS"/>
</dbReference>
<dbReference type="PANTHER" id="PTHR10792">
    <property type="entry name" value="60S RIBOSOMAL PROTEIN L24"/>
    <property type="match status" value="1"/>
</dbReference>
<dbReference type="PANTHER" id="PTHR10792:SF1">
    <property type="entry name" value="RIBOSOMAL PROTEIN L24"/>
    <property type="match status" value="1"/>
</dbReference>
<dbReference type="Pfam" id="PF01246">
    <property type="entry name" value="Ribosomal_L24e"/>
    <property type="match status" value="1"/>
</dbReference>
<dbReference type="SUPFAM" id="SSF57716">
    <property type="entry name" value="Glucocorticoid receptor-like (DNA-binding domain)"/>
    <property type="match status" value="1"/>
</dbReference>
<dbReference type="PROSITE" id="PS01073">
    <property type="entry name" value="RIBOSOMAL_L24E"/>
    <property type="match status" value="1"/>
</dbReference>
<name>RL24A_CANAL</name>
<keyword id="KW-0002">3D-structure</keyword>
<keyword id="KW-0963">Cytoplasm</keyword>
<keyword id="KW-1185">Reference proteome</keyword>
<keyword id="KW-0687">Ribonucleoprotein</keyword>
<keyword id="KW-0689">Ribosomal protein</keyword>
<accession>Q5A6A1</accession>